<reference key="1">
    <citation type="journal article" date="1999" name="Nature">
        <title>Genomic sequence comparison of two unrelated isolates of the human gastric pathogen Helicobacter pylori.</title>
        <authorList>
            <person name="Alm R.A."/>
            <person name="Ling L.-S.L."/>
            <person name="Moir D.T."/>
            <person name="King B.L."/>
            <person name="Brown E.D."/>
            <person name="Doig P.C."/>
            <person name="Smith D.R."/>
            <person name="Noonan B."/>
            <person name="Guild B.C."/>
            <person name="deJonge B.L."/>
            <person name="Carmel G."/>
            <person name="Tummino P.J."/>
            <person name="Caruso A."/>
            <person name="Uria-Nickelsen M."/>
            <person name="Mills D.M."/>
            <person name="Ives C."/>
            <person name="Gibson R."/>
            <person name="Merberg D."/>
            <person name="Mills S.D."/>
            <person name="Jiang Q."/>
            <person name="Taylor D.E."/>
            <person name="Vovis G.F."/>
            <person name="Trust T.J."/>
        </authorList>
    </citation>
    <scope>NUCLEOTIDE SEQUENCE [LARGE SCALE GENOMIC DNA]</scope>
    <source>
        <strain>J99 / ATCC 700824</strain>
    </source>
</reference>
<name>TPX_HELPJ</name>
<evidence type="ECO:0000255" key="1">
    <source>
        <dbReference type="HAMAP-Rule" id="MF_00269"/>
    </source>
</evidence>
<accession>Q9ZKE7</accession>
<feature type="chain" id="PRO_0000187882" description="Thiol peroxidase">
    <location>
        <begin position="1"/>
        <end position="166"/>
    </location>
</feature>
<feature type="domain" description="Thioredoxin" evidence="1">
    <location>
        <begin position="18"/>
        <end position="166"/>
    </location>
</feature>
<feature type="active site" description="Cysteine sulfenic acid (-SOH) intermediate" evidence="1">
    <location>
        <position position="60"/>
    </location>
</feature>
<feature type="disulfide bond" description="Redox-active" evidence="1">
    <location>
        <begin position="60"/>
        <end position="94"/>
    </location>
</feature>
<sequence length="166" mass="18262">MQKVTFKEETYQLEGKALKVGDKAPDVKLVNGDLQEVNLLKQGVRFQVVSALPSLTGSVCLLQAKHFNEQAGKLPSVSFSVISMDLPFSQGQICGAEGIKDLRILSDFRYKAFGENYGVLLGKGSLQGLLARSVFVLDDKGVVIYKEIVQNILEEPNYEALLKVLK</sequence>
<gene>
    <name evidence="1" type="primary">tpx</name>
    <name type="ordered locus">jhp_0991</name>
</gene>
<proteinExistence type="inferred from homology"/>
<dbReference type="EC" id="1.11.1.24" evidence="1"/>
<dbReference type="EMBL" id="AE001439">
    <property type="protein sequence ID" value="AAD06572.1"/>
    <property type="molecule type" value="Genomic_DNA"/>
</dbReference>
<dbReference type="PIR" id="D71861">
    <property type="entry name" value="D71861"/>
</dbReference>
<dbReference type="RefSeq" id="WP_001174640.1">
    <property type="nucleotide sequence ID" value="NZ_CP011330.1"/>
</dbReference>
<dbReference type="SMR" id="Q9ZKE7"/>
<dbReference type="IntAct" id="Q9ZKE7">
    <property type="interactions" value="1"/>
</dbReference>
<dbReference type="KEGG" id="hpj:jhp_0991"/>
<dbReference type="PATRIC" id="fig|85963.30.peg.1600"/>
<dbReference type="eggNOG" id="COG2077">
    <property type="taxonomic scope" value="Bacteria"/>
</dbReference>
<dbReference type="Proteomes" id="UP000000804">
    <property type="component" value="Chromosome"/>
</dbReference>
<dbReference type="GO" id="GO:0008379">
    <property type="term" value="F:thioredoxin peroxidase activity"/>
    <property type="evidence" value="ECO:0007669"/>
    <property type="project" value="UniProtKB-UniRule"/>
</dbReference>
<dbReference type="CDD" id="cd03014">
    <property type="entry name" value="PRX_Atyp2cys"/>
    <property type="match status" value="1"/>
</dbReference>
<dbReference type="Gene3D" id="3.40.30.10">
    <property type="entry name" value="Glutaredoxin"/>
    <property type="match status" value="1"/>
</dbReference>
<dbReference type="HAMAP" id="MF_00269">
    <property type="entry name" value="Tpx"/>
    <property type="match status" value="1"/>
</dbReference>
<dbReference type="InterPro" id="IPR013740">
    <property type="entry name" value="Redoxin"/>
</dbReference>
<dbReference type="InterPro" id="IPR036249">
    <property type="entry name" value="Thioredoxin-like_sf"/>
</dbReference>
<dbReference type="InterPro" id="IPR013766">
    <property type="entry name" value="Thioredoxin_domain"/>
</dbReference>
<dbReference type="InterPro" id="IPR002065">
    <property type="entry name" value="TPX"/>
</dbReference>
<dbReference type="InterPro" id="IPR018219">
    <property type="entry name" value="Tpx_CS"/>
</dbReference>
<dbReference type="InterPro" id="IPR050455">
    <property type="entry name" value="Tpx_Peroxidase_subfamily"/>
</dbReference>
<dbReference type="NCBIfam" id="NF001808">
    <property type="entry name" value="PRK00522.1"/>
    <property type="match status" value="1"/>
</dbReference>
<dbReference type="PANTHER" id="PTHR43110">
    <property type="entry name" value="THIOL PEROXIDASE"/>
    <property type="match status" value="1"/>
</dbReference>
<dbReference type="PANTHER" id="PTHR43110:SF1">
    <property type="entry name" value="THIOL PEROXIDASE"/>
    <property type="match status" value="1"/>
</dbReference>
<dbReference type="Pfam" id="PF08534">
    <property type="entry name" value="Redoxin"/>
    <property type="match status" value="1"/>
</dbReference>
<dbReference type="SUPFAM" id="SSF52833">
    <property type="entry name" value="Thioredoxin-like"/>
    <property type="match status" value="1"/>
</dbReference>
<dbReference type="PROSITE" id="PS51352">
    <property type="entry name" value="THIOREDOXIN_2"/>
    <property type="match status" value="1"/>
</dbReference>
<dbReference type="PROSITE" id="PS01265">
    <property type="entry name" value="TPX"/>
    <property type="match status" value="1"/>
</dbReference>
<comment type="function">
    <text evidence="1">Thiol-specific peroxidase that catalyzes the reduction of hydrogen peroxide and organic hydroperoxides to water and alcohols, respectively. Plays a role in cell protection against oxidative stress by detoxifying peroxides.</text>
</comment>
<comment type="catalytic activity">
    <reaction evidence="1">
        <text>a hydroperoxide + [thioredoxin]-dithiol = an alcohol + [thioredoxin]-disulfide + H2O</text>
        <dbReference type="Rhea" id="RHEA:62620"/>
        <dbReference type="Rhea" id="RHEA-COMP:10698"/>
        <dbReference type="Rhea" id="RHEA-COMP:10700"/>
        <dbReference type="ChEBI" id="CHEBI:15377"/>
        <dbReference type="ChEBI" id="CHEBI:29950"/>
        <dbReference type="ChEBI" id="CHEBI:30879"/>
        <dbReference type="ChEBI" id="CHEBI:35924"/>
        <dbReference type="ChEBI" id="CHEBI:50058"/>
        <dbReference type="EC" id="1.11.1.24"/>
    </reaction>
</comment>
<comment type="subunit">
    <text evidence="1">Homodimer.</text>
</comment>
<comment type="miscellaneous">
    <text evidence="1">The active site is a conserved redox-active cysteine residue, the peroxidatic cysteine (C(P)), which makes the nucleophilic attack on the peroxide substrate. The peroxide oxidizes the C(P)-SH to cysteine sulfenic acid (C(P)-SOH), which then reacts with another cysteine residue, the resolving cysteine (C(R)), to form a disulfide bridge. The disulfide is subsequently reduced by an appropriate electron donor to complete the catalytic cycle. In this atypical 2-Cys peroxiredoxin, C(R) is present in the same subunit to form an intramolecular disulfide. The disulfide is subsequently reduced by thioredoxin.</text>
</comment>
<comment type="similarity">
    <text evidence="1">Belongs to the peroxiredoxin family. Tpx subfamily.</text>
</comment>
<protein>
    <recommendedName>
        <fullName evidence="1">Thiol peroxidase</fullName>
        <shortName evidence="1">Tpx</shortName>
        <ecNumber evidence="1">1.11.1.24</ecNumber>
    </recommendedName>
    <alternativeName>
        <fullName evidence="1">Peroxiredoxin tpx</fullName>
        <shortName evidence="1">Prx</shortName>
    </alternativeName>
    <alternativeName>
        <fullName evidence="1">Thioredoxin peroxidase</fullName>
    </alternativeName>
    <alternativeName>
        <fullName evidence="1">Thioredoxin-dependent peroxiredoxin</fullName>
    </alternativeName>
</protein>
<keyword id="KW-0049">Antioxidant</keyword>
<keyword id="KW-1015">Disulfide bond</keyword>
<keyword id="KW-0560">Oxidoreductase</keyword>
<keyword id="KW-0575">Peroxidase</keyword>
<keyword id="KW-0676">Redox-active center</keyword>
<organism>
    <name type="scientific">Helicobacter pylori (strain J99 / ATCC 700824)</name>
    <name type="common">Campylobacter pylori J99</name>
    <dbReference type="NCBI Taxonomy" id="85963"/>
    <lineage>
        <taxon>Bacteria</taxon>
        <taxon>Pseudomonadati</taxon>
        <taxon>Campylobacterota</taxon>
        <taxon>Epsilonproteobacteria</taxon>
        <taxon>Campylobacterales</taxon>
        <taxon>Helicobacteraceae</taxon>
        <taxon>Helicobacter</taxon>
    </lineage>
</organism>